<feature type="chain" id="PRO_0000134317" description="Putative ribosomal protein uS2-like">
    <location>
        <begin position="1"/>
        <end position="208"/>
    </location>
</feature>
<gene>
    <name type="primary">rps2-2</name>
</gene>
<sequence length="208" mass="24366">MNVYVTLKTKLVAELRQIKQTLQTERNIIRVLRRKLKQIAAQKRFIKFLPKLRYLPTPVTKIEQTARFLVKKFVDPKMKYPMDSIYDKKLSRQSKKVAASRKKKWQRLEKYLGGISNMTKIKEKQIANNVAIIIGQQEEMNAVRECQKLGIKMFHIVDTNCNPGLADHFIPANDDARNSIKFILGKFLTRIRLAHKIKVKFKKTSLKK</sequence>
<organism>
    <name type="scientific">Chlamydomonas reinhardtii</name>
    <name type="common">Chlamydomonas smithii</name>
    <dbReference type="NCBI Taxonomy" id="3055"/>
    <lineage>
        <taxon>Eukaryota</taxon>
        <taxon>Viridiplantae</taxon>
        <taxon>Chlorophyta</taxon>
        <taxon>core chlorophytes</taxon>
        <taxon>Chlorophyceae</taxon>
        <taxon>CS clade</taxon>
        <taxon>Chlamydomonadales</taxon>
        <taxon>Chlamydomonadaceae</taxon>
        <taxon>Chlamydomonas</taxon>
    </lineage>
</organism>
<evidence type="ECO:0000305" key="1"/>
<accession>Q8HUH1</accession>
<accession>B7U1H6</accession>
<keyword id="KW-0150">Chloroplast</keyword>
<keyword id="KW-0934">Plastid</keyword>
<keyword id="KW-1185">Reference proteome</keyword>
<reference key="1">
    <citation type="journal article" date="2002" name="Plant Cell">
        <title>The Chlamydomonas reinhardtii plastid chromosome: islands of genes in a sea of repeats.</title>
        <authorList>
            <person name="Maul J.E."/>
            <person name="Lilly J.W."/>
            <person name="Cui L."/>
            <person name="dePamphilis C.W."/>
            <person name="Miller W."/>
            <person name="Harris E.H."/>
            <person name="Stern D.B."/>
        </authorList>
    </citation>
    <scope>NUCLEOTIDE SEQUENCE [LARGE SCALE GENOMIC DNA]</scope>
    <scope>IDENTIFICATION</scope>
    <scope>COMPLETE PLASTID GENOME</scope>
</reference>
<reference key="2">
    <citation type="journal article" date="2009" name="BMC Evol. Biol.">
        <title>Nucleotide diversity of the Chlamydomonas reinhardtii plastid genome: addressing the mutational-hazard hypothesis.</title>
        <authorList>
            <person name="Smith D.R."/>
            <person name="Lee R.W."/>
        </authorList>
    </citation>
    <scope>NUCLEOTIDE SEQUENCE [LARGE SCALE GENOMIC DNA]</scope>
    <source>
        <strain>CC-503</strain>
    </source>
</reference>
<geneLocation type="chloroplast"/>
<proteinExistence type="uncertain"/>
<name>RR2B_CHLRE</name>
<comment type="subcellular location">
    <subcellularLocation>
        <location>Plastid</location>
        <location>Chloroplast</location>
    </subcellularLocation>
</comment>
<comment type="similarity">
    <text evidence="1">Belongs to the universal ribosomal protein uS2 family.</text>
</comment>
<comment type="caution">
    <text evidence="1">Could be the product of a pseudogene. There is no detectable mRNA expression.</text>
</comment>
<comment type="sequence caution" evidence="1">
    <conflict type="erroneous initiation">
        <sequence resource="EMBL-CDS" id="ACJ50123"/>
    </conflict>
</comment>
<dbReference type="EMBL" id="AF541867">
    <property type="protein sequence ID" value="AAN17820.1"/>
    <property type="molecule type" value="Genomic_DNA"/>
</dbReference>
<dbReference type="EMBL" id="FJ423446">
    <property type="protein sequence ID" value="ACJ50123.1"/>
    <property type="status" value="ALT_INIT"/>
    <property type="molecule type" value="Genomic_DNA"/>
</dbReference>
<dbReference type="EMBL" id="BK000554">
    <property type="protein sequence ID" value="DAA00935.1"/>
    <property type="molecule type" value="Genomic_DNA"/>
</dbReference>
<dbReference type="SMR" id="Q8HUH1"/>
<dbReference type="STRING" id="3055.Q8HUH1"/>
<dbReference type="PaxDb" id="3055-DAA00935"/>
<dbReference type="KEGG" id="cre:ChreCp034"/>
<dbReference type="eggNOG" id="KOG0832">
    <property type="taxonomic scope" value="Eukaryota"/>
</dbReference>
<dbReference type="HOGENOM" id="CLU_1322574_0_0_1"/>
<dbReference type="InParanoid" id="Q8HUH1"/>
<dbReference type="Proteomes" id="UP000006906">
    <property type="component" value="Chloroplast"/>
</dbReference>
<dbReference type="GO" id="GO:0009507">
    <property type="term" value="C:chloroplast"/>
    <property type="evidence" value="ECO:0007669"/>
    <property type="project" value="UniProtKB-SubCell"/>
</dbReference>
<dbReference type="GO" id="GO:0005763">
    <property type="term" value="C:mitochondrial small ribosomal subunit"/>
    <property type="evidence" value="ECO:0000318"/>
    <property type="project" value="GO_Central"/>
</dbReference>
<dbReference type="GO" id="GO:0003735">
    <property type="term" value="F:structural constituent of ribosome"/>
    <property type="evidence" value="ECO:0000318"/>
    <property type="project" value="GO_Central"/>
</dbReference>
<dbReference type="GO" id="GO:0006412">
    <property type="term" value="P:translation"/>
    <property type="evidence" value="ECO:0007669"/>
    <property type="project" value="UniProtKB-UniRule"/>
</dbReference>
<dbReference type="Gene3D" id="3.40.50.10490">
    <property type="entry name" value="Glucose-6-phosphate isomerase like protein, domain 1"/>
    <property type="match status" value="1"/>
</dbReference>
<dbReference type="InterPro" id="IPR001865">
    <property type="entry name" value="Ribosomal_uS2"/>
</dbReference>
<dbReference type="InterPro" id="IPR005706">
    <property type="entry name" value="Ribosomal_uS2_bac/mit/plastid"/>
</dbReference>
<dbReference type="InterPro" id="IPR023591">
    <property type="entry name" value="Ribosomal_uS2_flav_dom_sf"/>
</dbReference>
<dbReference type="NCBIfam" id="TIGR01011">
    <property type="entry name" value="rpsB_bact"/>
    <property type="match status" value="1"/>
</dbReference>
<dbReference type="PANTHER" id="PTHR12534">
    <property type="entry name" value="30S RIBOSOMAL PROTEIN S2 PROKARYOTIC AND ORGANELLAR"/>
    <property type="match status" value="1"/>
</dbReference>
<dbReference type="PANTHER" id="PTHR12534:SF0">
    <property type="entry name" value="SMALL RIBOSOMAL SUBUNIT PROTEIN US2M"/>
    <property type="match status" value="1"/>
</dbReference>
<dbReference type="Pfam" id="PF00318">
    <property type="entry name" value="Ribosomal_S2"/>
    <property type="match status" value="1"/>
</dbReference>
<dbReference type="PRINTS" id="PR00395">
    <property type="entry name" value="RIBOSOMALS2"/>
</dbReference>
<dbReference type="SUPFAM" id="SSF52313">
    <property type="entry name" value="Ribosomal protein S2"/>
    <property type="match status" value="1"/>
</dbReference>
<protein>
    <recommendedName>
        <fullName>Putative ribosomal protein uS2-like</fullName>
    </recommendedName>
</protein>